<dbReference type="EMBL" id="CP001661">
    <property type="protein sequence ID" value="ACT19750.1"/>
    <property type="molecule type" value="Genomic_DNA"/>
</dbReference>
<dbReference type="SMR" id="C6E6X2"/>
<dbReference type="STRING" id="443144.GM21_3731"/>
<dbReference type="KEGG" id="gem:GM21_3731"/>
<dbReference type="eggNOG" id="COG1641">
    <property type="taxonomic scope" value="Bacteria"/>
</dbReference>
<dbReference type="HOGENOM" id="CLU_028523_2_1_7"/>
<dbReference type="OrthoDB" id="9765625at2"/>
<dbReference type="GO" id="GO:0016829">
    <property type="term" value="F:lyase activity"/>
    <property type="evidence" value="ECO:0007669"/>
    <property type="project" value="UniProtKB-UniRule"/>
</dbReference>
<dbReference type="GO" id="GO:0016151">
    <property type="term" value="F:nickel cation binding"/>
    <property type="evidence" value="ECO:0007669"/>
    <property type="project" value="UniProtKB-UniRule"/>
</dbReference>
<dbReference type="Gene3D" id="3.10.20.300">
    <property type="entry name" value="mk0293 like domain"/>
    <property type="match status" value="1"/>
</dbReference>
<dbReference type="Gene3D" id="3.30.70.1380">
    <property type="entry name" value="Transcriptional regulatory protein pf0864 domain like"/>
    <property type="match status" value="1"/>
</dbReference>
<dbReference type="HAMAP" id="MF_01074">
    <property type="entry name" value="LarC"/>
    <property type="match status" value="1"/>
</dbReference>
<dbReference type="InterPro" id="IPR002822">
    <property type="entry name" value="Ni_insertion"/>
</dbReference>
<dbReference type="NCBIfam" id="TIGR00299">
    <property type="entry name" value="nickel pincer cofactor biosynthesis protein LarC"/>
    <property type="match status" value="1"/>
</dbReference>
<dbReference type="PANTHER" id="PTHR36566">
    <property type="entry name" value="NICKEL INSERTION PROTEIN-RELATED"/>
    <property type="match status" value="1"/>
</dbReference>
<dbReference type="PANTHER" id="PTHR36566:SF1">
    <property type="entry name" value="PYRIDINIUM-3,5-BISTHIOCARBOXYLIC ACID MONONUCLEOTIDE NICKEL INSERTION PROTEIN"/>
    <property type="match status" value="1"/>
</dbReference>
<dbReference type="Pfam" id="PF01969">
    <property type="entry name" value="Ni_insertion"/>
    <property type="match status" value="1"/>
</dbReference>
<keyword id="KW-0533">Nickel</keyword>
<feature type="chain" id="PRO_1000213480" description="Putative nickel insertion protein">
    <location>
        <begin position="1"/>
        <end position="385"/>
    </location>
</feature>
<name>Y3731_GEOSM</name>
<evidence type="ECO:0000255" key="1">
    <source>
        <dbReference type="HAMAP-Rule" id="MF_01074"/>
    </source>
</evidence>
<comment type="similarity">
    <text evidence="1">Belongs to the LarC family.</text>
</comment>
<accession>C6E6X2</accession>
<proteinExistence type="inferred from homology"/>
<sequence length="385" mass="41498">MKVAYFDCFAGIAGDMTVAALIELGLPLEVLRRELAGLPLSGYALESSKVERHGVAGTSFKVTLTEADQPHRHYSGIAKMIDESGLKPRVKELAQRIFRRLAEAEAAVHGVPLERVHFHEVGAIDSIVDIVGTAIGLDYLGVEAVYASGLPYGRGFVQTAHGRLPVPAPATAKLMEGIPLTFDIGEGERVTPTGAAIIAALAEGFGPPPSLTPLGTGYGAGEKDFPELPNLLRVLLGERAEGKGHQEVLVLETHIDDMNPEIFGFLMERLLEAGALDVAFSPLQMKKNRPATRLTVIADPADLEKLSAIVLSESTAIGLRYYPARRVTAARRCETRETTLGEVAVKVLETGRVTPEYDSCRKIALEKGIPLIEVYRTVERECGQA</sequence>
<organism>
    <name type="scientific">Geobacter sp. (strain M21)</name>
    <dbReference type="NCBI Taxonomy" id="443144"/>
    <lineage>
        <taxon>Bacteria</taxon>
        <taxon>Pseudomonadati</taxon>
        <taxon>Thermodesulfobacteriota</taxon>
        <taxon>Desulfuromonadia</taxon>
        <taxon>Geobacterales</taxon>
        <taxon>Geobacteraceae</taxon>
        <taxon>Geobacter</taxon>
    </lineage>
</organism>
<reference key="1">
    <citation type="submission" date="2009-07" db="EMBL/GenBank/DDBJ databases">
        <title>Complete sequence of Geobacter sp. M21.</title>
        <authorList>
            <consortium name="US DOE Joint Genome Institute"/>
            <person name="Lucas S."/>
            <person name="Copeland A."/>
            <person name="Lapidus A."/>
            <person name="Glavina del Rio T."/>
            <person name="Dalin E."/>
            <person name="Tice H."/>
            <person name="Bruce D."/>
            <person name="Goodwin L."/>
            <person name="Pitluck S."/>
            <person name="Saunders E."/>
            <person name="Brettin T."/>
            <person name="Detter J.C."/>
            <person name="Han C."/>
            <person name="Larimer F."/>
            <person name="Land M."/>
            <person name="Hauser L."/>
            <person name="Kyrpides N."/>
            <person name="Ovchinnikova G."/>
            <person name="Lovley D."/>
        </authorList>
    </citation>
    <scope>NUCLEOTIDE SEQUENCE [LARGE SCALE GENOMIC DNA]</scope>
    <source>
        <strain>M21</strain>
    </source>
</reference>
<gene>
    <name type="ordered locus">GM21_3731</name>
</gene>
<protein>
    <recommendedName>
        <fullName evidence="1">Putative nickel insertion protein</fullName>
    </recommendedName>
</protein>